<reference key="1">
    <citation type="journal article" date="2007" name="Science">
        <title>Sea anemone genome reveals ancestral eumetazoan gene repertoire and genomic organization.</title>
        <authorList>
            <person name="Putnam N.H."/>
            <person name="Srivastava M."/>
            <person name="Hellsten U."/>
            <person name="Dirks B."/>
            <person name="Chapman J."/>
            <person name="Salamov A."/>
            <person name="Terry A."/>
            <person name="Shapiro H."/>
            <person name="Lindquist E."/>
            <person name="Kapitonov V.V."/>
            <person name="Jurka J."/>
            <person name="Genikhovich G."/>
            <person name="Grigoriev I.V."/>
            <person name="Lucas S.M."/>
            <person name="Steele R.E."/>
            <person name="Finnerty J.R."/>
            <person name="Technau U."/>
            <person name="Martindale M.Q."/>
            <person name="Rokhsar D.S."/>
        </authorList>
    </citation>
    <scope>NUCLEOTIDE SEQUENCE [LARGE SCALE GENOMIC DNA]</scope>
    <source>
        <strain>CH2 X CH6</strain>
    </source>
</reference>
<comment type="function">
    <text evidence="1">Required for maturation of ribosomal RNAs and formation of the large ribosomal subunit.</text>
</comment>
<comment type="subcellular location">
    <subcellularLocation>
        <location evidence="1">Nucleus</location>
        <location evidence="1">Nucleolus</location>
    </subcellularLocation>
    <subcellularLocation>
        <location evidence="1">Nucleus</location>
        <location evidence="1">Nucleoplasm</location>
    </subcellularLocation>
</comment>
<comment type="similarity">
    <text evidence="1">Belongs to the WD repeat WDR12/YTM1 family.</text>
</comment>
<gene>
    <name type="ORF">v1g82024</name>
</gene>
<evidence type="ECO:0000255" key="1">
    <source>
        <dbReference type="HAMAP-Rule" id="MF_03029"/>
    </source>
</evidence>
<evidence type="ECO:0000256" key="2">
    <source>
        <dbReference type="SAM" id="MobiDB-lite"/>
    </source>
</evidence>
<feature type="chain" id="PRO_0000369568" description="Ribosome biogenesis protein WDR12 homolog">
    <location>
        <begin position="1"/>
        <end position="416" status="greater than"/>
    </location>
</feature>
<feature type="repeat" description="WD 1">
    <location>
        <begin position="101"/>
        <end position="138"/>
    </location>
</feature>
<feature type="repeat" description="WD 2">
    <location>
        <begin position="140"/>
        <end position="184"/>
    </location>
</feature>
<feature type="repeat" description="WD 3">
    <location>
        <begin position="189"/>
        <end position="228"/>
    </location>
</feature>
<feature type="repeat" description="WD 4">
    <location>
        <begin position="259"/>
        <end position="297"/>
    </location>
</feature>
<feature type="repeat" description="WD 5">
    <location>
        <begin position="299"/>
        <end position="338"/>
    </location>
</feature>
<feature type="repeat" description="WD 6">
    <location>
        <begin position="344"/>
        <end position="384"/>
    </location>
</feature>
<feature type="repeat" description="WD 7">
    <location>
        <begin position="388"/>
        <end position="416"/>
    </location>
</feature>
<feature type="region of interest" description="Ubiquitin-like (UBL) domain" evidence="1">
    <location>
        <begin position="7"/>
        <end position="89"/>
    </location>
</feature>
<feature type="region of interest" description="Disordered" evidence="2">
    <location>
        <begin position="226"/>
        <end position="245"/>
    </location>
</feature>
<feature type="non-terminal residue">
    <location>
        <position position="416"/>
    </location>
</feature>
<accession>A7RHG8</accession>
<organism>
    <name type="scientific">Nematostella vectensis</name>
    <name type="common">Starlet sea anemone</name>
    <dbReference type="NCBI Taxonomy" id="45351"/>
    <lineage>
        <taxon>Eukaryota</taxon>
        <taxon>Metazoa</taxon>
        <taxon>Cnidaria</taxon>
        <taxon>Anthozoa</taxon>
        <taxon>Hexacorallia</taxon>
        <taxon>Actiniaria</taxon>
        <taxon>Edwardsiidae</taxon>
        <taxon>Nematostella</taxon>
    </lineage>
</organism>
<sequence>MADVEQVQVRFFTKQKKYEIADTPFSLSANIGHGDLNDLINGLLGAGNVGQSIQFDFLIDSQYLQDTIQKHMKAKEISAESVVEIEYLEKHPAPQPDNILVHDDWVSSVSRCKNCIITGSYDNCVQIWDDQGSCLAKVKGHTSPVKDVEWVSKDEQKGVFLSSSQDQSIRVMEWSIGSGEASCVHVCKGHTQSVDSISINPSATKFCSGSWDKTLKLWSAVVNPEGGDEGENGSLSKKQKTTGVKKKATTRTPLMTFTGHTQAVSSVVWMDRTTICSAGWDHCIRLWDAESGVNKQTLTGSKVFCEIAYSALNQCLASGSADKYIRLWDHRAEDGQVVRGILTSHQGWVSSVSWSPSNQFELASASYDTTVKIWDTRSPYTPLYTLTGHQDKVMCVRWSSSRHLMSGGTDNQLILY</sequence>
<dbReference type="EMBL" id="DS469511">
    <property type="protein sequence ID" value="EDO48980.1"/>
    <property type="molecule type" value="Genomic_DNA"/>
</dbReference>
<dbReference type="RefSeq" id="XP_001641043.1">
    <property type="nucleotide sequence ID" value="XM_001640993.1"/>
</dbReference>
<dbReference type="SMR" id="A7RHG8"/>
<dbReference type="STRING" id="45351.A7RHG8"/>
<dbReference type="EnsemblMetazoa" id="EDO48980">
    <property type="protein sequence ID" value="EDO48980"/>
    <property type="gene ID" value="NEMVEDRAFT_v1g82024"/>
</dbReference>
<dbReference type="eggNOG" id="KOG0313">
    <property type="taxonomic scope" value="Eukaryota"/>
</dbReference>
<dbReference type="HOGENOM" id="CLU_000288_57_0_1"/>
<dbReference type="InParanoid" id="A7RHG8"/>
<dbReference type="OMA" id="DHKYVEF"/>
<dbReference type="PhylomeDB" id="A7RHG8"/>
<dbReference type="Proteomes" id="UP000001593">
    <property type="component" value="Unassembled WGS sequence"/>
</dbReference>
<dbReference type="GO" id="GO:0005730">
    <property type="term" value="C:nucleolus"/>
    <property type="evidence" value="ECO:0007669"/>
    <property type="project" value="UniProtKB-SubCell"/>
</dbReference>
<dbReference type="GO" id="GO:0005654">
    <property type="term" value="C:nucleoplasm"/>
    <property type="evidence" value="ECO:0007669"/>
    <property type="project" value="UniProtKB-SubCell"/>
</dbReference>
<dbReference type="GO" id="GO:0006364">
    <property type="term" value="P:rRNA processing"/>
    <property type="evidence" value="ECO:0007669"/>
    <property type="project" value="UniProtKB-KW"/>
</dbReference>
<dbReference type="CDD" id="cd00200">
    <property type="entry name" value="WD40"/>
    <property type="match status" value="1"/>
</dbReference>
<dbReference type="Gene3D" id="2.130.10.10">
    <property type="entry name" value="YVTN repeat-like/Quinoprotein amine dehydrogenase"/>
    <property type="match status" value="3"/>
</dbReference>
<dbReference type="HAMAP" id="MF_03029">
    <property type="entry name" value="WDR12"/>
    <property type="match status" value="1"/>
</dbReference>
<dbReference type="InterPro" id="IPR020472">
    <property type="entry name" value="G-protein_beta_WD-40_rep"/>
</dbReference>
<dbReference type="InterPro" id="IPR012972">
    <property type="entry name" value="NLE"/>
</dbReference>
<dbReference type="InterPro" id="IPR015943">
    <property type="entry name" value="WD40/YVTN_repeat-like_dom_sf"/>
</dbReference>
<dbReference type="InterPro" id="IPR019775">
    <property type="entry name" value="WD40_repeat_CS"/>
</dbReference>
<dbReference type="InterPro" id="IPR036322">
    <property type="entry name" value="WD40_repeat_dom_sf"/>
</dbReference>
<dbReference type="InterPro" id="IPR001680">
    <property type="entry name" value="WD40_rpt"/>
</dbReference>
<dbReference type="InterPro" id="IPR028599">
    <property type="entry name" value="WDR12/Ytm1"/>
</dbReference>
<dbReference type="PANTHER" id="PTHR19855:SF11">
    <property type="entry name" value="RIBOSOME BIOGENESIS PROTEIN WDR12"/>
    <property type="match status" value="1"/>
</dbReference>
<dbReference type="PANTHER" id="PTHR19855">
    <property type="entry name" value="WD40 REPEAT PROTEIN 12, 37"/>
    <property type="match status" value="1"/>
</dbReference>
<dbReference type="Pfam" id="PF08154">
    <property type="entry name" value="NLE"/>
    <property type="match status" value="1"/>
</dbReference>
<dbReference type="Pfam" id="PF00400">
    <property type="entry name" value="WD40"/>
    <property type="match status" value="7"/>
</dbReference>
<dbReference type="PRINTS" id="PR00320">
    <property type="entry name" value="GPROTEINBRPT"/>
</dbReference>
<dbReference type="SMART" id="SM00320">
    <property type="entry name" value="WD40"/>
    <property type="match status" value="7"/>
</dbReference>
<dbReference type="SUPFAM" id="SSF50978">
    <property type="entry name" value="WD40 repeat-like"/>
    <property type="match status" value="1"/>
</dbReference>
<dbReference type="PROSITE" id="PS00678">
    <property type="entry name" value="WD_REPEATS_1"/>
    <property type="match status" value="2"/>
</dbReference>
<dbReference type="PROSITE" id="PS50082">
    <property type="entry name" value="WD_REPEATS_2"/>
    <property type="match status" value="6"/>
</dbReference>
<dbReference type="PROSITE" id="PS50294">
    <property type="entry name" value="WD_REPEATS_REGION"/>
    <property type="match status" value="1"/>
</dbReference>
<name>WDR12_NEMVE</name>
<keyword id="KW-0539">Nucleus</keyword>
<keyword id="KW-1185">Reference proteome</keyword>
<keyword id="KW-0677">Repeat</keyword>
<keyword id="KW-0690">Ribosome biogenesis</keyword>
<keyword id="KW-0698">rRNA processing</keyword>
<keyword id="KW-0853">WD repeat</keyword>
<proteinExistence type="inferred from homology"/>
<protein>
    <recommendedName>
        <fullName evidence="1">Ribosome biogenesis protein WDR12 homolog</fullName>
    </recommendedName>
</protein>